<gene>
    <name evidence="1" type="primary">rpoC</name>
    <name type="ordered locus">BceJ2315_02300</name>
    <name type="ORF">BCAL0227</name>
</gene>
<reference key="1">
    <citation type="journal article" date="2009" name="J. Bacteriol.">
        <title>The genome of Burkholderia cenocepacia J2315, an epidemic pathogen of cystic fibrosis patients.</title>
        <authorList>
            <person name="Holden M.T."/>
            <person name="Seth-Smith H.M."/>
            <person name="Crossman L.C."/>
            <person name="Sebaihia M."/>
            <person name="Bentley S.D."/>
            <person name="Cerdeno-Tarraga A.M."/>
            <person name="Thomson N.R."/>
            <person name="Bason N."/>
            <person name="Quail M.A."/>
            <person name="Sharp S."/>
            <person name="Cherevach I."/>
            <person name="Churcher C."/>
            <person name="Goodhead I."/>
            <person name="Hauser H."/>
            <person name="Holroyd N."/>
            <person name="Mungall K."/>
            <person name="Scott P."/>
            <person name="Walker D."/>
            <person name="White B."/>
            <person name="Rose H."/>
            <person name="Iversen P."/>
            <person name="Mil-Homens D."/>
            <person name="Rocha E.P."/>
            <person name="Fialho A.M."/>
            <person name="Baldwin A."/>
            <person name="Dowson C."/>
            <person name="Barrell B.G."/>
            <person name="Govan J.R."/>
            <person name="Vandamme P."/>
            <person name="Hart C.A."/>
            <person name="Mahenthiralingam E."/>
            <person name="Parkhill J."/>
        </authorList>
    </citation>
    <scope>NUCLEOTIDE SEQUENCE [LARGE SCALE GENOMIC DNA]</scope>
    <source>
        <strain>ATCC BAA-245 / DSM 16553 / LMG 16656 / NCTC 13227 / J2315 / CF5610</strain>
    </source>
</reference>
<comment type="function">
    <text evidence="1">DNA-dependent RNA polymerase catalyzes the transcription of DNA into RNA using the four ribonucleoside triphosphates as substrates.</text>
</comment>
<comment type="catalytic activity">
    <reaction evidence="1">
        <text>RNA(n) + a ribonucleoside 5'-triphosphate = RNA(n+1) + diphosphate</text>
        <dbReference type="Rhea" id="RHEA:21248"/>
        <dbReference type="Rhea" id="RHEA-COMP:14527"/>
        <dbReference type="Rhea" id="RHEA-COMP:17342"/>
        <dbReference type="ChEBI" id="CHEBI:33019"/>
        <dbReference type="ChEBI" id="CHEBI:61557"/>
        <dbReference type="ChEBI" id="CHEBI:140395"/>
        <dbReference type="EC" id="2.7.7.6"/>
    </reaction>
</comment>
<comment type="cofactor">
    <cofactor evidence="1">
        <name>Mg(2+)</name>
        <dbReference type="ChEBI" id="CHEBI:18420"/>
    </cofactor>
    <text evidence="1">Binds 1 Mg(2+) ion per subunit.</text>
</comment>
<comment type="cofactor">
    <cofactor evidence="1">
        <name>Zn(2+)</name>
        <dbReference type="ChEBI" id="CHEBI:29105"/>
    </cofactor>
    <text evidence="1">Binds 2 Zn(2+) ions per subunit.</text>
</comment>
<comment type="subunit">
    <text evidence="1">The RNAP catalytic core consists of 2 alpha, 1 beta, 1 beta' and 1 omega subunit. When a sigma factor is associated with the core the holoenzyme is formed, which can initiate transcription.</text>
</comment>
<comment type="similarity">
    <text evidence="1">Belongs to the RNA polymerase beta' chain family.</text>
</comment>
<keyword id="KW-0240">DNA-directed RNA polymerase</keyword>
<keyword id="KW-0460">Magnesium</keyword>
<keyword id="KW-0479">Metal-binding</keyword>
<keyword id="KW-0548">Nucleotidyltransferase</keyword>
<keyword id="KW-0804">Transcription</keyword>
<keyword id="KW-0808">Transferase</keyword>
<keyword id="KW-0862">Zinc</keyword>
<accession>B4E5B3</accession>
<name>RPOC_BURCJ</name>
<sequence length="1413" mass="156180">MKALLDLFKQVQQEEVFDAIKIGLASPDKIRSWSFGEVKKPETINYRTFKPERDGLFCAKIFGPIKDYECLCGKYKRLKHRGVICEKCGVEVTLAKVRRERMGHIELASPVAHIWFLKSLPSRLGMVLDMTLRDIERVLYFEAYVVIEPGMTPLKARQIMTEEDYYNKVEEYGDEFRAEMGAEGVRELLRAINIDEQVETLRTELKNTGSEAKIKKYAKRLKVLEAFQRSGIKPEWMILEVLPVLPPELRPLVPLDGGRFATSDLNDLYRRVINRNNRLKRLLELKAPEIIVRNEKRMLQEAVDSLLDNGRRGKAMTGANKRPLKSLADMIKGKGGRFRQNLLGKRVDYSGRSVIVVGPTLKLHQCGLPKLMALELFKPFIFNKLEVMGVATTIKAAKKEVENQTPVVWDILEEVIREHPVMLNRAPTLHRLGIQAFEPVLIEGKAIQLHPLVCAAFNADFDGDQMAVHVPLSLEAQMEARTLMLASNNVLFPANGDPSIVPSQDIVLGLYYATREAINGKGEGLSFTGVSEVIRAYENKEVELASRVNVRITEMVRNEDTSEGAPEFVPKITLYATTVGRAILSEILPHGLPFSVLNKPLKKKEISRLINTAFRKCGLRATVVFADQLMQSGFRLATRAGISICVDDMLVPPQKETIVGDAAKKVKEYDRQYMSGLVTAQERYNNVVDIWSATSEAVGKAMMEQLSTEPVIDRDGNETRQESFNSIYMMADSGARGSAVQIRQLAGMRGLMAKPDGSIIETPITANFREGLNVLQYFISTHGARKGLADTALKTANSGYLTRRLVDVTQDLVVVEDDCGTSNGVAMKALVEGGEVVEALRDRILGRVAVADVVNPETQETLYESGTLLDETAVEEIERLGIDEVRVRTPLTCETRYGLCAACYGRDLGRGSLVNVGEAVGVIAAQSIGEPGTQLTMRTFHIGGAASRAAVASSVEAKSNGIVRFTATMRYVTNAKGEQIVISRSGEAMITDDFGRERERHKVPYGATLLQLDGATIKAGTQLATWDPLTRPIITEYGGTVKFENVEEGVTVAKQIDDVTGLSTLVVIDVKRRGSQASKSVRPQVKLLDANGEEVKIPGTEHAVQIGFQVGALITVKDGQQVQVGEVLARIPTEAQKTRDITGGLPRVAELFEARSPKDAGILAEVTGTTSFGKDTKGKQRLVITDLEGNQHEFLIAKEKQVLVHDAQVVNKGEMIVDGPADPHDILRLQGIEALSRYIVDEVQDVYRLQGVKINDKHIEVIVRQMLRRVQITDNGDTRFIPGEQVERSDMLDENDRMIAEGKRPASYDNVLLGITKASLSTDSFISAASFQETTRVLTEAAIMGKRDDLRGLKENVIVGRLIPAGTGLAFHKARKAKESSDRERFDQIAAEEAFDFGTPSAPAEEPQHPAAE</sequence>
<evidence type="ECO:0000255" key="1">
    <source>
        <dbReference type="HAMAP-Rule" id="MF_01322"/>
    </source>
</evidence>
<evidence type="ECO:0000256" key="2">
    <source>
        <dbReference type="SAM" id="MobiDB-lite"/>
    </source>
</evidence>
<dbReference type="EC" id="2.7.7.6" evidence="1"/>
<dbReference type="EMBL" id="AM747720">
    <property type="protein sequence ID" value="CAR50538.1"/>
    <property type="molecule type" value="Genomic_DNA"/>
</dbReference>
<dbReference type="RefSeq" id="WP_006482896.1">
    <property type="nucleotide sequence ID" value="NC_011000.1"/>
</dbReference>
<dbReference type="SMR" id="B4E5B3"/>
<dbReference type="GeneID" id="56556778"/>
<dbReference type="KEGG" id="bcj:BCAL0227"/>
<dbReference type="eggNOG" id="COG0086">
    <property type="taxonomic scope" value="Bacteria"/>
</dbReference>
<dbReference type="HOGENOM" id="CLU_000524_3_1_4"/>
<dbReference type="BioCyc" id="BCEN216591:G1G1V-269-MONOMER"/>
<dbReference type="Proteomes" id="UP000001035">
    <property type="component" value="Chromosome 1"/>
</dbReference>
<dbReference type="GO" id="GO:0000428">
    <property type="term" value="C:DNA-directed RNA polymerase complex"/>
    <property type="evidence" value="ECO:0007669"/>
    <property type="project" value="UniProtKB-KW"/>
</dbReference>
<dbReference type="GO" id="GO:0003677">
    <property type="term" value="F:DNA binding"/>
    <property type="evidence" value="ECO:0007669"/>
    <property type="project" value="UniProtKB-UniRule"/>
</dbReference>
<dbReference type="GO" id="GO:0003899">
    <property type="term" value="F:DNA-directed RNA polymerase activity"/>
    <property type="evidence" value="ECO:0007669"/>
    <property type="project" value="UniProtKB-UniRule"/>
</dbReference>
<dbReference type="GO" id="GO:0000287">
    <property type="term" value="F:magnesium ion binding"/>
    <property type="evidence" value="ECO:0007669"/>
    <property type="project" value="UniProtKB-UniRule"/>
</dbReference>
<dbReference type="GO" id="GO:0008270">
    <property type="term" value="F:zinc ion binding"/>
    <property type="evidence" value="ECO:0007669"/>
    <property type="project" value="UniProtKB-UniRule"/>
</dbReference>
<dbReference type="GO" id="GO:0006351">
    <property type="term" value="P:DNA-templated transcription"/>
    <property type="evidence" value="ECO:0007669"/>
    <property type="project" value="UniProtKB-UniRule"/>
</dbReference>
<dbReference type="CDD" id="cd02655">
    <property type="entry name" value="RNAP_beta'_C"/>
    <property type="match status" value="1"/>
</dbReference>
<dbReference type="CDD" id="cd01609">
    <property type="entry name" value="RNAP_beta'_N"/>
    <property type="match status" value="1"/>
</dbReference>
<dbReference type="FunFam" id="1.10.132.30:FF:000003">
    <property type="entry name" value="DNA-directed RNA polymerase subunit beta"/>
    <property type="match status" value="1"/>
</dbReference>
<dbReference type="FunFam" id="1.10.150.390:FF:000002">
    <property type="entry name" value="DNA-directed RNA polymerase subunit beta"/>
    <property type="match status" value="1"/>
</dbReference>
<dbReference type="FunFam" id="4.10.860.120:FF:000001">
    <property type="entry name" value="DNA-directed RNA polymerase subunit beta"/>
    <property type="match status" value="1"/>
</dbReference>
<dbReference type="Gene3D" id="1.10.132.30">
    <property type="match status" value="1"/>
</dbReference>
<dbReference type="Gene3D" id="1.10.150.390">
    <property type="match status" value="1"/>
</dbReference>
<dbReference type="Gene3D" id="1.10.1790.20">
    <property type="match status" value="1"/>
</dbReference>
<dbReference type="Gene3D" id="1.10.40.90">
    <property type="match status" value="1"/>
</dbReference>
<dbReference type="Gene3D" id="2.40.40.20">
    <property type="match status" value="1"/>
</dbReference>
<dbReference type="Gene3D" id="2.40.50.100">
    <property type="match status" value="3"/>
</dbReference>
<dbReference type="Gene3D" id="4.10.860.120">
    <property type="entry name" value="RNA polymerase II, clamp domain"/>
    <property type="match status" value="1"/>
</dbReference>
<dbReference type="Gene3D" id="1.10.274.100">
    <property type="entry name" value="RNA polymerase Rpb1, domain 3"/>
    <property type="match status" value="1"/>
</dbReference>
<dbReference type="HAMAP" id="MF_01322">
    <property type="entry name" value="RNApol_bact_RpoC"/>
    <property type="match status" value="1"/>
</dbReference>
<dbReference type="InterPro" id="IPR045867">
    <property type="entry name" value="DNA-dir_RpoC_beta_prime"/>
</dbReference>
<dbReference type="InterPro" id="IPR012754">
    <property type="entry name" value="DNA-dir_RpoC_beta_prime_bact"/>
</dbReference>
<dbReference type="InterPro" id="IPR000722">
    <property type="entry name" value="RNA_pol_asu"/>
</dbReference>
<dbReference type="InterPro" id="IPR006592">
    <property type="entry name" value="RNA_pol_N"/>
</dbReference>
<dbReference type="InterPro" id="IPR007080">
    <property type="entry name" value="RNA_pol_Rpb1_1"/>
</dbReference>
<dbReference type="InterPro" id="IPR007066">
    <property type="entry name" value="RNA_pol_Rpb1_3"/>
</dbReference>
<dbReference type="InterPro" id="IPR042102">
    <property type="entry name" value="RNA_pol_Rpb1_3_sf"/>
</dbReference>
<dbReference type="InterPro" id="IPR007083">
    <property type="entry name" value="RNA_pol_Rpb1_4"/>
</dbReference>
<dbReference type="InterPro" id="IPR007081">
    <property type="entry name" value="RNA_pol_Rpb1_5"/>
</dbReference>
<dbReference type="InterPro" id="IPR044893">
    <property type="entry name" value="RNA_pol_Rpb1_clamp_domain"/>
</dbReference>
<dbReference type="InterPro" id="IPR038120">
    <property type="entry name" value="Rpb1_funnel_sf"/>
</dbReference>
<dbReference type="NCBIfam" id="TIGR02386">
    <property type="entry name" value="rpoC_TIGR"/>
    <property type="match status" value="1"/>
</dbReference>
<dbReference type="PANTHER" id="PTHR19376">
    <property type="entry name" value="DNA-DIRECTED RNA POLYMERASE"/>
    <property type="match status" value="1"/>
</dbReference>
<dbReference type="PANTHER" id="PTHR19376:SF54">
    <property type="entry name" value="DNA-DIRECTED RNA POLYMERASE SUBUNIT BETA"/>
    <property type="match status" value="1"/>
</dbReference>
<dbReference type="Pfam" id="PF04997">
    <property type="entry name" value="RNA_pol_Rpb1_1"/>
    <property type="match status" value="1"/>
</dbReference>
<dbReference type="Pfam" id="PF00623">
    <property type="entry name" value="RNA_pol_Rpb1_2"/>
    <property type="match status" value="2"/>
</dbReference>
<dbReference type="Pfam" id="PF04983">
    <property type="entry name" value="RNA_pol_Rpb1_3"/>
    <property type="match status" value="1"/>
</dbReference>
<dbReference type="Pfam" id="PF05000">
    <property type="entry name" value="RNA_pol_Rpb1_4"/>
    <property type="match status" value="1"/>
</dbReference>
<dbReference type="Pfam" id="PF04998">
    <property type="entry name" value="RNA_pol_Rpb1_5"/>
    <property type="match status" value="1"/>
</dbReference>
<dbReference type="SMART" id="SM00663">
    <property type="entry name" value="RPOLA_N"/>
    <property type="match status" value="1"/>
</dbReference>
<dbReference type="SUPFAM" id="SSF64484">
    <property type="entry name" value="beta and beta-prime subunits of DNA dependent RNA-polymerase"/>
    <property type="match status" value="1"/>
</dbReference>
<proteinExistence type="inferred from homology"/>
<organism>
    <name type="scientific">Burkholderia cenocepacia (strain ATCC BAA-245 / DSM 16553 / LMG 16656 / NCTC 13227 / J2315 / CF5610)</name>
    <name type="common">Burkholderia cepacia (strain J2315)</name>
    <dbReference type="NCBI Taxonomy" id="216591"/>
    <lineage>
        <taxon>Bacteria</taxon>
        <taxon>Pseudomonadati</taxon>
        <taxon>Pseudomonadota</taxon>
        <taxon>Betaproteobacteria</taxon>
        <taxon>Burkholderiales</taxon>
        <taxon>Burkholderiaceae</taxon>
        <taxon>Burkholderia</taxon>
        <taxon>Burkholderia cepacia complex</taxon>
    </lineage>
</organism>
<feature type="chain" id="PRO_0000353308" description="DNA-directed RNA polymerase subunit beta'">
    <location>
        <begin position="1"/>
        <end position="1413"/>
    </location>
</feature>
<feature type="region of interest" description="Disordered" evidence="2">
    <location>
        <begin position="1392"/>
        <end position="1413"/>
    </location>
</feature>
<feature type="binding site" evidence="1">
    <location>
        <position position="70"/>
    </location>
    <ligand>
        <name>Zn(2+)</name>
        <dbReference type="ChEBI" id="CHEBI:29105"/>
        <label>1</label>
    </ligand>
</feature>
<feature type="binding site" evidence="1">
    <location>
        <position position="72"/>
    </location>
    <ligand>
        <name>Zn(2+)</name>
        <dbReference type="ChEBI" id="CHEBI:29105"/>
        <label>1</label>
    </ligand>
</feature>
<feature type="binding site" evidence="1">
    <location>
        <position position="85"/>
    </location>
    <ligand>
        <name>Zn(2+)</name>
        <dbReference type="ChEBI" id="CHEBI:29105"/>
        <label>1</label>
    </ligand>
</feature>
<feature type="binding site" evidence="1">
    <location>
        <position position="88"/>
    </location>
    <ligand>
        <name>Zn(2+)</name>
        <dbReference type="ChEBI" id="CHEBI:29105"/>
        <label>1</label>
    </ligand>
</feature>
<feature type="binding site" evidence="1">
    <location>
        <position position="460"/>
    </location>
    <ligand>
        <name>Mg(2+)</name>
        <dbReference type="ChEBI" id="CHEBI:18420"/>
    </ligand>
</feature>
<feature type="binding site" evidence="1">
    <location>
        <position position="462"/>
    </location>
    <ligand>
        <name>Mg(2+)</name>
        <dbReference type="ChEBI" id="CHEBI:18420"/>
    </ligand>
</feature>
<feature type="binding site" evidence="1">
    <location>
        <position position="464"/>
    </location>
    <ligand>
        <name>Mg(2+)</name>
        <dbReference type="ChEBI" id="CHEBI:18420"/>
    </ligand>
</feature>
<feature type="binding site" evidence="1">
    <location>
        <position position="819"/>
    </location>
    <ligand>
        <name>Zn(2+)</name>
        <dbReference type="ChEBI" id="CHEBI:29105"/>
        <label>2</label>
    </ligand>
</feature>
<feature type="binding site" evidence="1">
    <location>
        <position position="893"/>
    </location>
    <ligand>
        <name>Zn(2+)</name>
        <dbReference type="ChEBI" id="CHEBI:29105"/>
        <label>2</label>
    </ligand>
</feature>
<feature type="binding site" evidence="1">
    <location>
        <position position="900"/>
    </location>
    <ligand>
        <name>Zn(2+)</name>
        <dbReference type="ChEBI" id="CHEBI:29105"/>
        <label>2</label>
    </ligand>
</feature>
<feature type="binding site" evidence="1">
    <location>
        <position position="903"/>
    </location>
    <ligand>
        <name>Zn(2+)</name>
        <dbReference type="ChEBI" id="CHEBI:29105"/>
        <label>2</label>
    </ligand>
</feature>
<protein>
    <recommendedName>
        <fullName evidence="1">DNA-directed RNA polymerase subunit beta'</fullName>
        <shortName evidence="1">RNAP subunit beta'</shortName>
        <ecNumber evidence="1">2.7.7.6</ecNumber>
    </recommendedName>
    <alternativeName>
        <fullName evidence="1">RNA polymerase subunit beta'</fullName>
    </alternativeName>
    <alternativeName>
        <fullName evidence="1">Transcriptase subunit beta'</fullName>
    </alternativeName>
</protein>